<comment type="function">
    <text evidence="1">Catalyzes the addition and repair of the essential 3'-terminal CCA sequence in tRNAs without using a nucleic acid template. Adds these three nucleotides in the order of C, C, and A to the tRNA nucleotide-73, using CTP and ATP as substrates and producing inorganic pyrophosphate. tRNA 3'-terminal CCA addition is required both for tRNA processing and repair. Also involved in tRNA surveillance by mediating tandem CCA addition to generate a CCACCA at the 3' terminus of unstable tRNAs. While stable tRNAs receive only 3'-terminal CCA, unstable tRNAs are marked with CCACCA and rapidly degraded.</text>
</comment>
<comment type="catalytic activity">
    <reaction evidence="1">
        <text>a tRNA precursor + 2 CTP + ATP = a tRNA with a 3' CCA end + 3 diphosphate</text>
        <dbReference type="Rhea" id="RHEA:14433"/>
        <dbReference type="Rhea" id="RHEA-COMP:10465"/>
        <dbReference type="Rhea" id="RHEA-COMP:10468"/>
        <dbReference type="ChEBI" id="CHEBI:30616"/>
        <dbReference type="ChEBI" id="CHEBI:33019"/>
        <dbReference type="ChEBI" id="CHEBI:37563"/>
        <dbReference type="ChEBI" id="CHEBI:74896"/>
        <dbReference type="ChEBI" id="CHEBI:83071"/>
        <dbReference type="EC" id="2.7.7.72"/>
    </reaction>
</comment>
<comment type="catalytic activity">
    <reaction evidence="1">
        <text>a tRNA with a 3' CCA end + 2 CTP + ATP = a tRNA with a 3' CCACCA end + 3 diphosphate</text>
        <dbReference type="Rhea" id="RHEA:76235"/>
        <dbReference type="Rhea" id="RHEA-COMP:10468"/>
        <dbReference type="Rhea" id="RHEA-COMP:18655"/>
        <dbReference type="ChEBI" id="CHEBI:30616"/>
        <dbReference type="ChEBI" id="CHEBI:33019"/>
        <dbReference type="ChEBI" id="CHEBI:37563"/>
        <dbReference type="ChEBI" id="CHEBI:83071"/>
        <dbReference type="ChEBI" id="CHEBI:195187"/>
    </reaction>
    <physiologicalReaction direction="left-to-right" evidence="1">
        <dbReference type="Rhea" id="RHEA:76236"/>
    </physiologicalReaction>
</comment>
<comment type="cofactor">
    <cofactor evidence="1">
        <name>Mg(2+)</name>
        <dbReference type="ChEBI" id="CHEBI:18420"/>
    </cofactor>
</comment>
<comment type="subunit">
    <text evidence="1">Homodimer.</text>
</comment>
<comment type="miscellaneous">
    <text evidence="1">A single active site specifically recognizes both ATP and CTP and is responsible for their addition.</text>
</comment>
<comment type="similarity">
    <text evidence="1">Belongs to the tRNA nucleotidyltransferase/poly(A) polymerase family. Bacterial CCA-adding enzyme type 3 subfamily.</text>
</comment>
<sequence>MERFKKASSIIETLKQQGHEAYFVGGSVRDLIIDRPIGDIDIATSALPEEVMAIFPRNVPVGLEHGTVIVLENGEPYEVTTFRTESEYEDFRRPSSVQFVRSLEEDLKRRDFTMNAIAMTEEGEMVDLFAGQEAIQQREIVTVGNAADRFQEDALRMMRGIRFVSALGFSLETKTKQAIETYGHLLEHIAIERITVEFEKLLTGTYCVKGLKELVETKLFSHLPYLQMSEERLLKATQYKWDSFETDIEAWAFFLYCIGEEHPSVFLRQWKFSNKKIKDIVAVLLAIRTRKEKDWDTVLLYKTGIYIAEMAERVYEAMIESYNPTSVKRVQSMFHALPIQGRQEMNVTGNDLLNWANKKPGPWVADMLQKIEEAIVKGNVVNEKERIREWLQGCNLL</sequence>
<reference key="1">
    <citation type="submission" date="2008-10" db="EMBL/GenBank/DDBJ databases">
        <title>Genome sequence of Bacillus cereus G9842.</title>
        <authorList>
            <person name="Dodson R.J."/>
            <person name="Durkin A.S."/>
            <person name="Rosovitz M.J."/>
            <person name="Rasko D.A."/>
            <person name="Hoffmaster A."/>
            <person name="Ravel J."/>
            <person name="Sutton G."/>
        </authorList>
    </citation>
    <scope>NUCLEOTIDE SEQUENCE [LARGE SCALE GENOMIC DNA]</scope>
    <source>
        <strain>G9842</strain>
    </source>
</reference>
<protein>
    <recommendedName>
        <fullName evidence="1">CCA-adding enzyme</fullName>
        <ecNumber evidence="1">2.7.7.72</ecNumber>
    </recommendedName>
    <alternativeName>
        <fullName evidence="1">CCA tRNA nucleotidyltransferase</fullName>
    </alternativeName>
    <alternativeName>
        <fullName evidence="1">tRNA CCA-pyrophosphorylase</fullName>
    </alternativeName>
    <alternativeName>
        <fullName evidence="1">tRNA adenylyl-/cytidylyl- transferase</fullName>
    </alternativeName>
    <alternativeName>
        <fullName evidence="1">tRNA nucleotidyltransferase</fullName>
    </alternativeName>
    <alternativeName>
        <fullName evidence="1">tRNA-NT</fullName>
    </alternativeName>
</protein>
<proteinExistence type="inferred from homology"/>
<gene>
    <name evidence="1" type="primary">cca</name>
    <name type="ordered locus">BCG9842_B3753</name>
</gene>
<dbReference type="EC" id="2.7.7.72" evidence="1"/>
<dbReference type="EMBL" id="CP001186">
    <property type="protein sequence ID" value="ACK95749.1"/>
    <property type="molecule type" value="Genomic_DNA"/>
</dbReference>
<dbReference type="RefSeq" id="WP_000439312.1">
    <property type="nucleotide sequence ID" value="NC_011772.1"/>
</dbReference>
<dbReference type="SMR" id="B7IPB4"/>
<dbReference type="KEGG" id="bcg:BCG9842_B3753"/>
<dbReference type="HOGENOM" id="CLU_015961_3_0_9"/>
<dbReference type="Proteomes" id="UP000006744">
    <property type="component" value="Chromosome"/>
</dbReference>
<dbReference type="GO" id="GO:0005524">
    <property type="term" value="F:ATP binding"/>
    <property type="evidence" value="ECO:0007669"/>
    <property type="project" value="UniProtKB-UniRule"/>
</dbReference>
<dbReference type="GO" id="GO:0004810">
    <property type="term" value="F:CCA tRNA nucleotidyltransferase activity"/>
    <property type="evidence" value="ECO:0007669"/>
    <property type="project" value="UniProtKB-UniRule"/>
</dbReference>
<dbReference type="GO" id="GO:0000287">
    <property type="term" value="F:magnesium ion binding"/>
    <property type="evidence" value="ECO:0007669"/>
    <property type="project" value="UniProtKB-UniRule"/>
</dbReference>
<dbReference type="GO" id="GO:0000049">
    <property type="term" value="F:tRNA binding"/>
    <property type="evidence" value="ECO:0007669"/>
    <property type="project" value="UniProtKB-UniRule"/>
</dbReference>
<dbReference type="GO" id="GO:0042245">
    <property type="term" value="P:RNA repair"/>
    <property type="evidence" value="ECO:0007669"/>
    <property type="project" value="UniProtKB-KW"/>
</dbReference>
<dbReference type="GO" id="GO:0001680">
    <property type="term" value="P:tRNA 3'-terminal CCA addition"/>
    <property type="evidence" value="ECO:0007669"/>
    <property type="project" value="UniProtKB-UniRule"/>
</dbReference>
<dbReference type="CDD" id="cd05398">
    <property type="entry name" value="NT_ClassII-CCAase"/>
    <property type="match status" value="1"/>
</dbReference>
<dbReference type="Gene3D" id="1.10.110.30">
    <property type="match status" value="1"/>
</dbReference>
<dbReference type="Gene3D" id="1.10.246.80">
    <property type="match status" value="1"/>
</dbReference>
<dbReference type="Gene3D" id="1.20.58.560">
    <property type="match status" value="1"/>
</dbReference>
<dbReference type="Gene3D" id="3.30.460.10">
    <property type="entry name" value="Beta Polymerase, domain 2"/>
    <property type="match status" value="1"/>
</dbReference>
<dbReference type="HAMAP" id="MF_01263">
    <property type="entry name" value="CCA_bact_type3"/>
    <property type="match status" value="1"/>
</dbReference>
<dbReference type="InterPro" id="IPR050264">
    <property type="entry name" value="Bact_CCA-adding_enz_type3_sf"/>
</dbReference>
<dbReference type="InterPro" id="IPR032810">
    <property type="entry name" value="CCA-adding_enz_C"/>
</dbReference>
<dbReference type="InterPro" id="IPR023068">
    <property type="entry name" value="CCA-adding_enz_firmicutes"/>
</dbReference>
<dbReference type="InterPro" id="IPR043519">
    <property type="entry name" value="NT_sf"/>
</dbReference>
<dbReference type="InterPro" id="IPR002646">
    <property type="entry name" value="PolA_pol_head_dom"/>
</dbReference>
<dbReference type="InterPro" id="IPR032828">
    <property type="entry name" value="PolyA_RNA-bd"/>
</dbReference>
<dbReference type="NCBIfam" id="NF009814">
    <property type="entry name" value="PRK13299.1"/>
    <property type="match status" value="1"/>
</dbReference>
<dbReference type="PANTHER" id="PTHR46173">
    <property type="entry name" value="CCA TRNA NUCLEOTIDYLTRANSFERASE 1, MITOCHONDRIAL"/>
    <property type="match status" value="1"/>
</dbReference>
<dbReference type="PANTHER" id="PTHR46173:SF1">
    <property type="entry name" value="CCA TRNA NUCLEOTIDYLTRANSFERASE 1, MITOCHONDRIAL"/>
    <property type="match status" value="1"/>
</dbReference>
<dbReference type="Pfam" id="PF01743">
    <property type="entry name" value="PolyA_pol"/>
    <property type="match status" value="1"/>
</dbReference>
<dbReference type="Pfam" id="PF12627">
    <property type="entry name" value="PolyA_pol_RNAbd"/>
    <property type="match status" value="1"/>
</dbReference>
<dbReference type="Pfam" id="PF13735">
    <property type="entry name" value="tRNA_NucTran2_2"/>
    <property type="match status" value="1"/>
</dbReference>
<dbReference type="SUPFAM" id="SSF81301">
    <property type="entry name" value="Nucleotidyltransferase"/>
    <property type="match status" value="1"/>
</dbReference>
<dbReference type="SUPFAM" id="SSF81891">
    <property type="entry name" value="Poly A polymerase C-terminal region-like"/>
    <property type="match status" value="1"/>
</dbReference>
<evidence type="ECO:0000255" key="1">
    <source>
        <dbReference type="HAMAP-Rule" id="MF_01263"/>
    </source>
</evidence>
<feature type="chain" id="PRO_1000140069" description="CCA-adding enzyme">
    <location>
        <begin position="1"/>
        <end position="397"/>
    </location>
</feature>
<feature type="binding site" evidence="1">
    <location>
        <position position="26"/>
    </location>
    <ligand>
        <name>ATP</name>
        <dbReference type="ChEBI" id="CHEBI:30616"/>
    </ligand>
</feature>
<feature type="binding site" evidence="1">
    <location>
        <position position="26"/>
    </location>
    <ligand>
        <name>CTP</name>
        <dbReference type="ChEBI" id="CHEBI:37563"/>
    </ligand>
</feature>
<feature type="binding site" evidence="1">
    <location>
        <position position="29"/>
    </location>
    <ligand>
        <name>ATP</name>
        <dbReference type="ChEBI" id="CHEBI:30616"/>
    </ligand>
</feature>
<feature type="binding site" evidence="1">
    <location>
        <position position="29"/>
    </location>
    <ligand>
        <name>CTP</name>
        <dbReference type="ChEBI" id="CHEBI:37563"/>
    </ligand>
</feature>
<feature type="binding site" evidence="1">
    <location>
        <position position="39"/>
    </location>
    <ligand>
        <name>Mg(2+)</name>
        <dbReference type="ChEBI" id="CHEBI:18420"/>
    </ligand>
</feature>
<feature type="binding site" evidence="1">
    <location>
        <position position="41"/>
    </location>
    <ligand>
        <name>Mg(2+)</name>
        <dbReference type="ChEBI" id="CHEBI:18420"/>
    </ligand>
</feature>
<feature type="binding site" evidence="1">
    <location>
        <position position="110"/>
    </location>
    <ligand>
        <name>ATP</name>
        <dbReference type="ChEBI" id="CHEBI:30616"/>
    </ligand>
</feature>
<feature type="binding site" evidence="1">
    <location>
        <position position="110"/>
    </location>
    <ligand>
        <name>CTP</name>
        <dbReference type="ChEBI" id="CHEBI:37563"/>
    </ligand>
</feature>
<feature type="binding site" evidence="1">
    <location>
        <position position="153"/>
    </location>
    <ligand>
        <name>ATP</name>
        <dbReference type="ChEBI" id="CHEBI:30616"/>
    </ligand>
</feature>
<feature type="binding site" evidence="1">
    <location>
        <position position="153"/>
    </location>
    <ligand>
        <name>CTP</name>
        <dbReference type="ChEBI" id="CHEBI:37563"/>
    </ligand>
</feature>
<feature type="binding site" evidence="1">
    <location>
        <position position="156"/>
    </location>
    <ligand>
        <name>ATP</name>
        <dbReference type="ChEBI" id="CHEBI:30616"/>
    </ligand>
</feature>
<feature type="binding site" evidence="1">
    <location>
        <position position="156"/>
    </location>
    <ligand>
        <name>CTP</name>
        <dbReference type="ChEBI" id="CHEBI:37563"/>
    </ligand>
</feature>
<feature type="binding site" evidence="1">
    <location>
        <position position="159"/>
    </location>
    <ligand>
        <name>ATP</name>
        <dbReference type="ChEBI" id="CHEBI:30616"/>
    </ligand>
</feature>
<feature type="binding site" evidence="1">
    <location>
        <position position="159"/>
    </location>
    <ligand>
        <name>CTP</name>
        <dbReference type="ChEBI" id="CHEBI:37563"/>
    </ligand>
</feature>
<feature type="binding site" evidence="1">
    <location>
        <position position="162"/>
    </location>
    <ligand>
        <name>ATP</name>
        <dbReference type="ChEBI" id="CHEBI:30616"/>
    </ligand>
</feature>
<feature type="binding site" evidence="1">
    <location>
        <position position="162"/>
    </location>
    <ligand>
        <name>CTP</name>
        <dbReference type="ChEBI" id="CHEBI:37563"/>
    </ligand>
</feature>
<accession>B7IPB4</accession>
<keyword id="KW-0067">ATP-binding</keyword>
<keyword id="KW-0460">Magnesium</keyword>
<keyword id="KW-0479">Metal-binding</keyword>
<keyword id="KW-0547">Nucleotide-binding</keyword>
<keyword id="KW-0548">Nucleotidyltransferase</keyword>
<keyword id="KW-0692">RNA repair</keyword>
<keyword id="KW-0694">RNA-binding</keyword>
<keyword id="KW-0808">Transferase</keyword>
<keyword id="KW-0819">tRNA processing</keyword>
<name>CCA_BACC2</name>
<organism>
    <name type="scientific">Bacillus cereus (strain G9842)</name>
    <dbReference type="NCBI Taxonomy" id="405531"/>
    <lineage>
        <taxon>Bacteria</taxon>
        <taxon>Bacillati</taxon>
        <taxon>Bacillota</taxon>
        <taxon>Bacilli</taxon>
        <taxon>Bacillales</taxon>
        <taxon>Bacillaceae</taxon>
        <taxon>Bacillus</taxon>
        <taxon>Bacillus cereus group</taxon>
    </lineage>
</organism>